<accession>Q9CBL9</accession>
<proteinExistence type="inferred from homology"/>
<evidence type="ECO:0000255" key="1">
    <source>
        <dbReference type="HAMAP-Rule" id="MF_01340"/>
    </source>
</evidence>
<name>Y1808_MYCLE</name>
<feature type="chain" id="PRO_0000057644" description="UPF0353 protein ML1808">
    <location>
        <begin position="1"/>
        <end position="335"/>
    </location>
</feature>
<feature type="transmembrane region" description="Helical" evidence="1">
    <location>
        <begin position="18"/>
        <end position="38"/>
    </location>
</feature>
<feature type="transmembrane region" description="Helical" evidence="1">
    <location>
        <begin position="67"/>
        <end position="87"/>
    </location>
</feature>
<feature type="transmembrane region" description="Helical" evidence="1">
    <location>
        <begin position="133"/>
        <end position="153"/>
    </location>
</feature>
<feature type="transmembrane region" description="Helical" evidence="1">
    <location>
        <begin position="309"/>
        <end position="329"/>
    </location>
</feature>
<feature type="domain" description="VWFA" evidence="1">
    <location>
        <begin position="98"/>
        <end position="294"/>
    </location>
</feature>
<sequence length="335" mass="36100">MTLPLLGPMSLSGFEHSWFFLFIFIVFGLAAFYVMMQVARQRRMLRFANMELLESVAPNRPVQWRHVPAILLMLALLLFTIAMAGPTNDVRIPRNRAVVMLVIDVSQSMRATDVEPNRMAAAQEAAKQFAGELTPGINLGLIAYAGTATVLVSPTTNRYATKNALDKLQFADRTATGEAIFTALQAIATVGAVIGGGEMPPPARIVLFSDGKETMPTNPDNPKGAYTAARTAKDQGVPISTISFGTVYGFVEINGQRQPVPVDDETMKKVAQLSGGNSYNAATLAELKAVYASLQQQIGYETIKGDASAGWLRLGVLVLALAALTALLINRRLPT</sequence>
<protein>
    <recommendedName>
        <fullName evidence="1">UPF0353 protein ML1808</fullName>
    </recommendedName>
</protein>
<organism>
    <name type="scientific">Mycobacterium leprae (strain TN)</name>
    <dbReference type="NCBI Taxonomy" id="272631"/>
    <lineage>
        <taxon>Bacteria</taxon>
        <taxon>Bacillati</taxon>
        <taxon>Actinomycetota</taxon>
        <taxon>Actinomycetes</taxon>
        <taxon>Mycobacteriales</taxon>
        <taxon>Mycobacteriaceae</taxon>
        <taxon>Mycobacterium</taxon>
    </lineage>
</organism>
<keyword id="KW-1003">Cell membrane</keyword>
<keyword id="KW-0472">Membrane</keyword>
<keyword id="KW-1185">Reference proteome</keyword>
<keyword id="KW-0812">Transmembrane</keyword>
<keyword id="KW-1133">Transmembrane helix</keyword>
<dbReference type="EMBL" id="AL583923">
    <property type="protein sequence ID" value="CAC30761.1"/>
    <property type="molecule type" value="Genomic_DNA"/>
</dbReference>
<dbReference type="PIR" id="A87135">
    <property type="entry name" value="A87135"/>
</dbReference>
<dbReference type="RefSeq" id="NP_302229.1">
    <property type="nucleotide sequence ID" value="NC_002677.1"/>
</dbReference>
<dbReference type="RefSeq" id="WP_010908550.1">
    <property type="nucleotide sequence ID" value="NC_002677.1"/>
</dbReference>
<dbReference type="SMR" id="Q9CBL9"/>
<dbReference type="STRING" id="272631.gene:17575655"/>
<dbReference type="KEGG" id="mle:ML1808"/>
<dbReference type="PATRIC" id="fig|272631.5.peg.3433"/>
<dbReference type="Leproma" id="ML1808"/>
<dbReference type="eggNOG" id="COG2304">
    <property type="taxonomic scope" value="Bacteria"/>
</dbReference>
<dbReference type="HOGENOM" id="CLU_024570_2_0_11"/>
<dbReference type="OrthoDB" id="8882959at2"/>
<dbReference type="Proteomes" id="UP000000806">
    <property type="component" value="Chromosome"/>
</dbReference>
<dbReference type="GO" id="GO:0005886">
    <property type="term" value="C:plasma membrane"/>
    <property type="evidence" value="ECO:0007669"/>
    <property type="project" value="UniProtKB-SubCell"/>
</dbReference>
<dbReference type="CDD" id="cd00198">
    <property type="entry name" value="vWFA"/>
    <property type="match status" value="1"/>
</dbReference>
<dbReference type="FunFam" id="3.40.50.410:FF:000078">
    <property type="entry name" value="UPF0353 protein RN09_1826"/>
    <property type="match status" value="1"/>
</dbReference>
<dbReference type="Gene3D" id="3.40.50.410">
    <property type="entry name" value="von Willebrand factor, type A domain"/>
    <property type="match status" value="1"/>
</dbReference>
<dbReference type="HAMAP" id="MF_01340">
    <property type="entry name" value="UPF0353"/>
    <property type="match status" value="1"/>
</dbReference>
<dbReference type="InterPro" id="IPR022933">
    <property type="entry name" value="UPF0353"/>
</dbReference>
<dbReference type="InterPro" id="IPR050768">
    <property type="entry name" value="UPF0353/GerABKA_families"/>
</dbReference>
<dbReference type="InterPro" id="IPR002035">
    <property type="entry name" value="VWF_A"/>
</dbReference>
<dbReference type="InterPro" id="IPR036465">
    <property type="entry name" value="vWFA_dom_sf"/>
</dbReference>
<dbReference type="NCBIfam" id="NF010238">
    <property type="entry name" value="PRK13685.1"/>
    <property type="match status" value="1"/>
</dbReference>
<dbReference type="PANTHER" id="PTHR22550:SF5">
    <property type="entry name" value="LEUCINE ZIPPER PROTEIN 4"/>
    <property type="match status" value="1"/>
</dbReference>
<dbReference type="PANTHER" id="PTHR22550">
    <property type="entry name" value="SPORE GERMINATION PROTEIN"/>
    <property type="match status" value="1"/>
</dbReference>
<dbReference type="Pfam" id="PF13519">
    <property type="entry name" value="VWA_2"/>
    <property type="match status" value="1"/>
</dbReference>
<dbReference type="SMART" id="SM00327">
    <property type="entry name" value="VWA"/>
    <property type="match status" value="1"/>
</dbReference>
<dbReference type="SUPFAM" id="SSF53300">
    <property type="entry name" value="vWA-like"/>
    <property type="match status" value="1"/>
</dbReference>
<dbReference type="PROSITE" id="PS50234">
    <property type="entry name" value="VWFA"/>
    <property type="match status" value="1"/>
</dbReference>
<comment type="subcellular location">
    <subcellularLocation>
        <location evidence="1">Cell membrane</location>
        <topology evidence="1">Multi-pass membrane protein</topology>
    </subcellularLocation>
</comment>
<comment type="similarity">
    <text evidence="1">Belongs to the UPF0353 family.</text>
</comment>
<reference key="1">
    <citation type="journal article" date="2001" name="Nature">
        <title>Massive gene decay in the leprosy bacillus.</title>
        <authorList>
            <person name="Cole S.T."/>
            <person name="Eiglmeier K."/>
            <person name="Parkhill J."/>
            <person name="James K.D."/>
            <person name="Thomson N.R."/>
            <person name="Wheeler P.R."/>
            <person name="Honore N."/>
            <person name="Garnier T."/>
            <person name="Churcher C.M."/>
            <person name="Harris D.E."/>
            <person name="Mungall K.L."/>
            <person name="Basham D."/>
            <person name="Brown D."/>
            <person name="Chillingworth T."/>
            <person name="Connor R."/>
            <person name="Davies R.M."/>
            <person name="Devlin K."/>
            <person name="Duthoy S."/>
            <person name="Feltwell T."/>
            <person name="Fraser A."/>
            <person name="Hamlin N."/>
            <person name="Holroyd S."/>
            <person name="Hornsby T."/>
            <person name="Jagels K."/>
            <person name="Lacroix C."/>
            <person name="Maclean J."/>
            <person name="Moule S."/>
            <person name="Murphy L.D."/>
            <person name="Oliver K."/>
            <person name="Quail M.A."/>
            <person name="Rajandream M.A."/>
            <person name="Rutherford K.M."/>
            <person name="Rutter S."/>
            <person name="Seeger K."/>
            <person name="Simon S."/>
            <person name="Simmonds M."/>
            <person name="Skelton J."/>
            <person name="Squares R."/>
            <person name="Squares S."/>
            <person name="Stevens K."/>
            <person name="Taylor K."/>
            <person name="Whitehead S."/>
            <person name="Woodward J.R."/>
            <person name="Barrell B.G."/>
        </authorList>
    </citation>
    <scope>NUCLEOTIDE SEQUENCE [LARGE SCALE GENOMIC DNA]</scope>
    <source>
        <strain>TN</strain>
    </source>
</reference>
<gene>
    <name type="ordered locus">ML1808</name>
</gene>